<dbReference type="EC" id="1.1.1.270"/>
<dbReference type="EMBL" id="CR380959">
    <property type="protein sequence ID" value="CAG62821.1"/>
    <property type="molecule type" value="Genomic_DNA"/>
</dbReference>
<dbReference type="RefSeq" id="XP_449841.1">
    <property type="nucleotide sequence ID" value="XM_449841.1"/>
</dbReference>
<dbReference type="SMR" id="Q6FIV3"/>
<dbReference type="FunCoup" id="Q6FIV3">
    <property type="interactions" value="166"/>
</dbReference>
<dbReference type="STRING" id="284593.Q6FIV3"/>
<dbReference type="EnsemblFungi" id="CAGL0M11506g-T">
    <property type="protein sequence ID" value="CAGL0M11506g-T-p1"/>
    <property type="gene ID" value="CAGL0M11506g"/>
</dbReference>
<dbReference type="KEGG" id="cgr:2891410"/>
<dbReference type="CGD" id="CAL0136807">
    <property type="gene designation" value="ERG27"/>
</dbReference>
<dbReference type="VEuPathDB" id="FungiDB:B1J91_M11506g"/>
<dbReference type="VEuPathDB" id="FungiDB:CAGL0M11506g"/>
<dbReference type="eggNOG" id="KOG1478">
    <property type="taxonomic scope" value="Eukaryota"/>
</dbReference>
<dbReference type="HOGENOM" id="CLU_029944_1_0_1"/>
<dbReference type="InParanoid" id="Q6FIV3"/>
<dbReference type="OMA" id="WHNIDGY"/>
<dbReference type="UniPathway" id="UPA00770">
    <property type="reaction ID" value="UER00758"/>
</dbReference>
<dbReference type="Proteomes" id="UP000002428">
    <property type="component" value="Chromosome M"/>
</dbReference>
<dbReference type="GO" id="GO:0005789">
    <property type="term" value="C:endoplasmic reticulum membrane"/>
    <property type="evidence" value="ECO:0007669"/>
    <property type="project" value="EnsemblFungi"/>
</dbReference>
<dbReference type="GO" id="GO:0005811">
    <property type="term" value="C:lipid droplet"/>
    <property type="evidence" value="ECO:0007669"/>
    <property type="project" value="EnsemblFungi"/>
</dbReference>
<dbReference type="GO" id="GO:0005741">
    <property type="term" value="C:mitochondrial outer membrane"/>
    <property type="evidence" value="ECO:0007669"/>
    <property type="project" value="TreeGrafter"/>
</dbReference>
<dbReference type="GO" id="GO:0000253">
    <property type="term" value="F:3-beta-hydroxysteroid 3-dehydrogenase (NADP+) activity"/>
    <property type="evidence" value="ECO:0007669"/>
    <property type="project" value="UniProtKB-EC"/>
</dbReference>
<dbReference type="GO" id="GO:0006696">
    <property type="term" value="P:ergosterol biosynthetic process"/>
    <property type="evidence" value="ECO:0007669"/>
    <property type="project" value="EnsemblFungi"/>
</dbReference>
<dbReference type="FunFam" id="3.40.50.720:FF:000525">
    <property type="entry name" value="3-keto-steroid reductase"/>
    <property type="match status" value="1"/>
</dbReference>
<dbReference type="Gene3D" id="3.40.50.720">
    <property type="entry name" value="NAD(P)-binding Rossmann-like Domain"/>
    <property type="match status" value="1"/>
</dbReference>
<dbReference type="InterPro" id="IPR051593">
    <property type="entry name" value="Ergosterol_Biosynth_ERG27"/>
</dbReference>
<dbReference type="InterPro" id="IPR036291">
    <property type="entry name" value="NAD(P)-bd_dom_sf"/>
</dbReference>
<dbReference type="InterPro" id="IPR038765">
    <property type="entry name" value="Papain-like_cys_pep_sf"/>
</dbReference>
<dbReference type="InterPro" id="IPR002347">
    <property type="entry name" value="SDR_fam"/>
</dbReference>
<dbReference type="PANTHER" id="PTHR43647:SF1">
    <property type="entry name" value="3-KETO-STEROID REDUCTASE ERG27"/>
    <property type="match status" value="1"/>
</dbReference>
<dbReference type="PANTHER" id="PTHR43647">
    <property type="entry name" value="DEHYDROGENASE"/>
    <property type="match status" value="1"/>
</dbReference>
<dbReference type="Pfam" id="PF00106">
    <property type="entry name" value="adh_short"/>
    <property type="match status" value="1"/>
</dbReference>
<dbReference type="SUPFAM" id="SSF54001">
    <property type="entry name" value="Cysteine proteinases"/>
    <property type="match status" value="1"/>
</dbReference>
<dbReference type="SUPFAM" id="SSF51735">
    <property type="entry name" value="NAD(P)-binding Rossmann-fold domains"/>
    <property type="match status" value="1"/>
</dbReference>
<feature type="chain" id="PRO_0000054591" description="3-keto-steroid reductase">
    <location>
        <begin position="1"/>
        <end position="348"/>
    </location>
</feature>
<feature type="active site" description="Proton donor" evidence="3">
    <location>
        <position position="180"/>
    </location>
</feature>
<feature type="active site" description="Proton donor" evidence="3">
    <location>
        <position position="203"/>
    </location>
</feature>
<feature type="active site" description="Lowers pKa of active site Tyr" evidence="3">
    <location>
        <position position="207"/>
    </location>
</feature>
<feature type="binding site" evidence="2">
    <location>
        <position position="18"/>
    </location>
    <ligand>
        <name>NADP(+)</name>
        <dbReference type="ChEBI" id="CHEBI:58349"/>
    </ligand>
</feature>
<feature type="binding site" evidence="2">
    <location>
        <position position="41"/>
    </location>
    <ligand>
        <name>NADP(+)</name>
        <dbReference type="ChEBI" id="CHEBI:58349"/>
    </ligand>
</feature>
<feature type="binding site" evidence="2">
    <location>
        <position position="47"/>
    </location>
    <ligand>
        <name>NADP(+)</name>
        <dbReference type="ChEBI" id="CHEBI:58349"/>
    </ligand>
</feature>
<feature type="binding site" evidence="3">
    <location>
        <position position="203"/>
    </location>
    <ligand>
        <name>NADP(+)</name>
        <dbReference type="ChEBI" id="CHEBI:58349"/>
    </ligand>
</feature>
<feature type="binding site" evidence="3">
    <location>
        <position position="207"/>
    </location>
    <ligand>
        <name>NADP(+)</name>
        <dbReference type="ChEBI" id="CHEBI:58349"/>
    </ligand>
</feature>
<feature type="binding site" evidence="2">
    <location>
        <position position="238"/>
    </location>
    <ligand>
        <name>NADP(+)</name>
        <dbReference type="ChEBI" id="CHEBI:58349"/>
    </ligand>
</feature>
<organism>
    <name type="scientific">Candida glabrata (strain ATCC 2001 / BCRC 20586 / JCM 3761 / NBRC 0622 / NRRL Y-65 / CBS 138)</name>
    <name type="common">Yeast</name>
    <name type="synonym">Nakaseomyces glabratus</name>
    <dbReference type="NCBI Taxonomy" id="284593"/>
    <lineage>
        <taxon>Eukaryota</taxon>
        <taxon>Fungi</taxon>
        <taxon>Dikarya</taxon>
        <taxon>Ascomycota</taxon>
        <taxon>Saccharomycotina</taxon>
        <taxon>Saccharomycetes</taxon>
        <taxon>Saccharomycetales</taxon>
        <taxon>Saccharomycetaceae</taxon>
        <taxon>Nakaseomyces</taxon>
    </lineage>
</organism>
<accession>Q6FIV3</accession>
<evidence type="ECO:0000250" key="1"/>
<evidence type="ECO:0000250" key="2">
    <source>
        <dbReference type="UniProtKB" id="L0E2Z4"/>
    </source>
</evidence>
<evidence type="ECO:0000250" key="3">
    <source>
        <dbReference type="UniProtKB" id="O93868"/>
    </source>
</evidence>
<evidence type="ECO:0000305" key="4"/>
<protein>
    <recommendedName>
        <fullName>3-keto-steroid reductase</fullName>
        <ecNumber>1.1.1.270</ecNumber>
    </recommendedName>
</protein>
<proteinExistence type="inferred from homology"/>
<sequence length="348" mass="39505">MTSKTRKVAVITGANSNLGLNIAYRLIERQSADVRLTLVVTSRTLPRVREVVELIKKFVATQEDPCSVDFDYLLVDFTNMVSVLNAYYDLNQKYESINYFFVNAAQGVYDGIDWIGAVKQVLSDPLEAVTNPTYRKQLVGVKSKDEMGLVFQANVFGPYYLIQKILPQLSKGKATVVWISSIMADPKHLSLQDIEMIKSDVTYEGSKRVVDLLHLATYKQMKSQGIHQYVVQPGIFTSYSFAKYLNFFTTFGMLFLFYLARLLGSKWHNIDGYKAANAPVYVATLINPHFEHQEVKYGSASSRDGMEYIETTDIDKTGSSDVLAYIEKKKLEWDDKLKDQITNSRIPI</sequence>
<reference key="1">
    <citation type="journal article" date="2004" name="Nature">
        <title>Genome evolution in yeasts.</title>
        <authorList>
            <person name="Dujon B."/>
            <person name="Sherman D."/>
            <person name="Fischer G."/>
            <person name="Durrens P."/>
            <person name="Casaregola S."/>
            <person name="Lafontaine I."/>
            <person name="de Montigny J."/>
            <person name="Marck C."/>
            <person name="Neuveglise C."/>
            <person name="Talla E."/>
            <person name="Goffard N."/>
            <person name="Frangeul L."/>
            <person name="Aigle M."/>
            <person name="Anthouard V."/>
            <person name="Babour A."/>
            <person name="Barbe V."/>
            <person name="Barnay S."/>
            <person name="Blanchin S."/>
            <person name="Beckerich J.-M."/>
            <person name="Beyne E."/>
            <person name="Bleykasten C."/>
            <person name="Boisrame A."/>
            <person name="Boyer J."/>
            <person name="Cattolico L."/>
            <person name="Confanioleri F."/>
            <person name="de Daruvar A."/>
            <person name="Despons L."/>
            <person name="Fabre E."/>
            <person name="Fairhead C."/>
            <person name="Ferry-Dumazet H."/>
            <person name="Groppi A."/>
            <person name="Hantraye F."/>
            <person name="Hennequin C."/>
            <person name="Jauniaux N."/>
            <person name="Joyet P."/>
            <person name="Kachouri R."/>
            <person name="Kerrest A."/>
            <person name="Koszul R."/>
            <person name="Lemaire M."/>
            <person name="Lesur I."/>
            <person name="Ma L."/>
            <person name="Muller H."/>
            <person name="Nicaud J.-M."/>
            <person name="Nikolski M."/>
            <person name="Oztas S."/>
            <person name="Ozier-Kalogeropoulos O."/>
            <person name="Pellenz S."/>
            <person name="Potier S."/>
            <person name="Richard G.-F."/>
            <person name="Straub M.-L."/>
            <person name="Suleau A."/>
            <person name="Swennen D."/>
            <person name="Tekaia F."/>
            <person name="Wesolowski-Louvel M."/>
            <person name="Westhof E."/>
            <person name="Wirth B."/>
            <person name="Zeniou-Meyer M."/>
            <person name="Zivanovic Y."/>
            <person name="Bolotin-Fukuhara M."/>
            <person name="Thierry A."/>
            <person name="Bouchier C."/>
            <person name="Caudron B."/>
            <person name="Scarpelli C."/>
            <person name="Gaillardin C."/>
            <person name="Weissenbach J."/>
            <person name="Wincker P."/>
            <person name="Souciet J.-L."/>
        </authorList>
    </citation>
    <scope>NUCLEOTIDE SEQUENCE [LARGE SCALE GENOMIC DNA]</scope>
    <source>
        <strain>ATCC 2001 / BCRC 20586 / JCM 3761 / NBRC 0622 / NRRL Y-65 / CBS 138</strain>
    </source>
</reference>
<comment type="function">
    <text evidence="1">Responsible for the reduction of the keto group on the C-3 of sterols.</text>
</comment>
<comment type="catalytic activity">
    <reaction>
        <text>a 3beta-hydroxysteroid + NADP(+) = a 3-oxosteroid + NADPH + H(+)</text>
        <dbReference type="Rhea" id="RHEA:34787"/>
        <dbReference type="ChEBI" id="CHEBI:15378"/>
        <dbReference type="ChEBI" id="CHEBI:36836"/>
        <dbReference type="ChEBI" id="CHEBI:47788"/>
        <dbReference type="ChEBI" id="CHEBI:57783"/>
        <dbReference type="ChEBI" id="CHEBI:58349"/>
        <dbReference type="EC" id="1.1.1.270"/>
    </reaction>
</comment>
<comment type="pathway">
    <text>Steroid biosynthesis; zymosterol biosynthesis; zymosterol from lanosterol: step 5/6.</text>
</comment>
<comment type="similarity">
    <text evidence="4">Belongs to the short-chain dehydrogenases/reductases (SDR) family. ERG27 subfamily.</text>
</comment>
<gene>
    <name type="primary">ERG27</name>
    <name type="ordered locus">CAGL0M11506g</name>
</gene>
<name>ERG27_CANGA</name>
<keyword id="KW-0444">Lipid biosynthesis</keyword>
<keyword id="KW-0443">Lipid metabolism</keyword>
<keyword id="KW-0521">NADP</keyword>
<keyword id="KW-0560">Oxidoreductase</keyword>
<keyword id="KW-1185">Reference proteome</keyword>
<keyword id="KW-0752">Steroid biosynthesis</keyword>